<reference key="1">
    <citation type="journal article" date="2014" name="Genome Announc.">
        <title>Complete Genome Sequence of the Extreme Thermophile Dictyoglomus thermophilum H-6-12.</title>
        <authorList>
            <person name="Coil D.A."/>
            <person name="Badger J.H."/>
            <person name="Forberger H.C."/>
            <person name="Riggs F."/>
            <person name="Madupu R."/>
            <person name="Fedorova N."/>
            <person name="Ward N."/>
            <person name="Robb F.T."/>
            <person name="Eisen J.A."/>
        </authorList>
    </citation>
    <scope>NUCLEOTIDE SEQUENCE [LARGE SCALE GENOMIC DNA]</scope>
    <source>
        <strain>ATCC 35947 / DSM 3960 / H-6-12</strain>
    </source>
</reference>
<keyword id="KW-0963">Cytoplasm</keyword>
<keyword id="KW-0489">Methyltransferase</keyword>
<keyword id="KW-0698">rRNA processing</keyword>
<keyword id="KW-0949">S-adenosyl-L-methionine</keyword>
<keyword id="KW-0808">Transferase</keyword>
<name>RSMG_DICT6</name>
<evidence type="ECO:0000255" key="1">
    <source>
        <dbReference type="HAMAP-Rule" id="MF_00074"/>
    </source>
</evidence>
<organism>
    <name type="scientific">Dictyoglomus thermophilum (strain ATCC 35947 / DSM 3960 / H-6-12)</name>
    <dbReference type="NCBI Taxonomy" id="309799"/>
    <lineage>
        <taxon>Bacteria</taxon>
        <taxon>Pseudomonadati</taxon>
        <taxon>Dictyoglomota</taxon>
        <taxon>Dictyoglomia</taxon>
        <taxon>Dictyoglomales</taxon>
        <taxon>Dictyoglomaceae</taxon>
        <taxon>Dictyoglomus</taxon>
    </lineage>
</organism>
<feature type="chain" id="PRO_1000092625" description="Ribosomal RNA small subunit methyltransferase G">
    <location>
        <begin position="1"/>
        <end position="240"/>
    </location>
</feature>
<feature type="binding site" evidence="1">
    <location>
        <position position="80"/>
    </location>
    <ligand>
        <name>S-adenosyl-L-methionine</name>
        <dbReference type="ChEBI" id="CHEBI:59789"/>
    </ligand>
</feature>
<feature type="binding site" evidence="1">
    <location>
        <position position="85"/>
    </location>
    <ligand>
        <name>S-adenosyl-L-methionine</name>
        <dbReference type="ChEBI" id="CHEBI:59789"/>
    </ligand>
</feature>
<feature type="binding site" evidence="1">
    <location>
        <begin position="131"/>
        <end position="132"/>
    </location>
    <ligand>
        <name>S-adenosyl-L-methionine</name>
        <dbReference type="ChEBI" id="CHEBI:59789"/>
    </ligand>
</feature>
<feature type="binding site" evidence="1">
    <location>
        <position position="150"/>
    </location>
    <ligand>
        <name>S-adenosyl-L-methionine</name>
        <dbReference type="ChEBI" id="CHEBI:59789"/>
    </ligand>
</feature>
<protein>
    <recommendedName>
        <fullName evidence="1">Ribosomal RNA small subunit methyltransferase G</fullName>
        <ecNumber evidence="1">2.1.1.-</ecNumber>
    </recommendedName>
    <alternativeName>
        <fullName evidence="1">16S rRNA 7-methylguanosine methyltransferase</fullName>
        <shortName evidence="1">16S rRNA m7G methyltransferase</shortName>
    </alternativeName>
</protein>
<accession>B5YFF7</accession>
<proteinExistence type="inferred from homology"/>
<comment type="function">
    <text evidence="1">Specifically methylates the N7 position of a guanine in 16S rRNA.</text>
</comment>
<comment type="subcellular location">
    <subcellularLocation>
        <location evidence="1">Cytoplasm</location>
    </subcellularLocation>
</comment>
<comment type="similarity">
    <text evidence="1">Belongs to the methyltransferase superfamily. RNA methyltransferase RsmG family.</text>
</comment>
<dbReference type="EC" id="2.1.1.-" evidence="1"/>
<dbReference type="EMBL" id="CP001146">
    <property type="protein sequence ID" value="ACI18940.1"/>
    <property type="molecule type" value="Genomic_DNA"/>
</dbReference>
<dbReference type="RefSeq" id="WP_012547572.1">
    <property type="nucleotide sequence ID" value="NC_011297.1"/>
</dbReference>
<dbReference type="SMR" id="B5YFF7"/>
<dbReference type="STRING" id="309799.DICTH_1446"/>
<dbReference type="PaxDb" id="309799-DICTH_1446"/>
<dbReference type="KEGG" id="dth:DICTH_1446"/>
<dbReference type="eggNOG" id="COG0357">
    <property type="taxonomic scope" value="Bacteria"/>
</dbReference>
<dbReference type="HOGENOM" id="CLU_065341_0_0_0"/>
<dbReference type="OrthoDB" id="9808773at2"/>
<dbReference type="Proteomes" id="UP000001733">
    <property type="component" value="Chromosome"/>
</dbReference>
<dbReference type="GO" id="GO:0005829">
    <property type="term" value="C:cytosol"/>
    <property type="evidence" value="ECO:0007669"/>
    <property type="project" value="TreeGrafter"/>
</dbReference>
<dbReference type="GO" id="GO:0070043">
    <property type="term" value="F:rRNA (guanine-N7-)-methyltransferase activity"/>
    <property type="evidence" value="ECO:0007669"/>
    <property type="project" value="UniProtKB-UniRule"/>
</dbReference>
<dbReference type="FunFam" id="3.40.50.150:FF:000041">
    <property type="entry name" value="Ribosomal RNA small subunit methyltransferase G"/>
    <property type="match status" value="1"/>
</dbReference>
<dbReference type="Gene3D" id="3.40.50.150">
    <property type="entry name" value="Vaccinia Virus protein VP39"/>
    <property type="match status" value="1"/>
</dbReference>
<dbReference type="HAMAP" id="MF_00074">
    <property type="entry name" value="16SrRNA_methyltr_G"/>
    <property type="match status" value="1"/>
</dbReference>
<dbReference type="InterPro" id="IPR003682">
    <property type="entry name" value="rRNA_ssu_MeTfrase_G"/>
</dbReference>
<dbReference type="InterPro" id="IPR029063">
    <property type="entry name" value="SAM-dependent_MTases_sf"/>
</dbReference>
<dbReference type="NCBIfam" id="TIGR00138">
    <property type="entry name" value="rsmG_gidB"/>
    <property type="match status" value="1"/>
</dbReference>
<dbReference type="PANTHER" id="PTHR31760">
    <property type="entry name" value="S-ADENOSYL-L-METHIONINE-DEPENDENT METHYLTRANSFERASES SUPERFAMILY PROTEIN"/>
    <property type="match status" value="1"/>
</dbReference>
<dbReference type="PANTHER" id="PTHR31760:SF0">
    <property type="entry name" value="S-ADENOSYL-L-METHIONINE-DEPENDENT METHYLTRANSFERASES SUPERFAMILY PROTEIN"/>
    <property type="match status" value="1"/>
</dbReference>
<dbReference type="Pfam" id="PF02527">
    <property type="entry name" value="GidB"/>
    <property type="match status" value="1"/>
</dbReference>
<dbReference type="SUPFAM" id="SSF53335">
    <property type="entry name" value="S-adenosyl-L-methionine-dependent methyltransferases"/>
    <property type="match status" value="1"/>
</dbReference>
<gene>
    <name evidence="1" type="primary">rsmG</name>
    <name type="ordered locus">DICTH_1446</name>
</gene>
<sequence length="240" mass="27882">MEENFKRILREKVSELNLSLDPLQEEKFYLYYMALKEWNRKINLTSLEGEEEIILKHFVDSLSCIIPIRNENIERIIDIGTGAGFPGIPIKIYDEKYKLTLLESQKKKILFLEELIKILELSDVEIVWDRAENLGKDPRYREQFDLALARGVAKPNIVLEYALPFVKTGGIFLGQATPNNLSEWENAQKVVGILGGKTEEKIEINFDNITRIFLKIRKINNTPEKYPRRPGIPEKRPLLP</sequence>